<organism>
    <name type="scientific">Anaplasma phagocytophilum (strain HZ)</name>
    <dbReference type="NCBI Taxonomy" id="212042"/>
    <lineage>
        <taxon>Bacteria</taxon>
        <taxon>Pseudomonadati</taxon>
        <taxon>Pseudomonadota</taxon>
        <taxon>Alphaproteobacteria</taxon>
        <taxon>Rickettsiales</taxon>
        <taxon>Anaplasmataceae</taxon>
        <taxon>Anaplasma</taxon>
        <taxon>phagocytophilum group</taxon>
    </lineage>
</organism>
<reference key="1">
    <citation type="journal article" date="2006" name="PLoS Genet.">
        <title>Comparative genomics of emerging human ehrlichiosis agents.</title>
        <authorList>
            <person name="Dunning Hotopp J.C."/>
            <person name="Lin M."/>
            <person name="Madupu R."/>
            <person name="Crabtree J."/>
            <person name="Angiuoli S.V."/>
            <person name="Eisen J.A."/>
            <person name="Seshadri R."/>
            <person name="Ren Q."/>
            <person name="Wu M."/>
            <person name="Utterback T.R."/>
            <person name="Smith S."/>
            <person name="Lewis M."/>
            <person name="Khouri H."/>
            <person name="Zhang C."/>
            <person name="Niu H."/>
            <person name="Lin Q."/>
            <person name="Ohashi N."/>
            <person name="Zhi N."/>
            <person name="Nelson W.C."/>
            <person name="Brinkac L.M."/>
            <person name="Dodson R.J."/>
            <person name="Rosovitz M.J."/>
            <person name="Sundaram J.P."/>
            <person name="Daugherty S.C."/>
            <person name="Davidsen T."/>
            <person name="Durkin A.S."/>
            <person name="Gwinn M.L."/>
            <person name="Haft D.H."/>
            <person name="Selengut J.D."/>
            <person name="Sullivan S.A."/>
            <person name="Zafar N."/>
            <person name="Zhou L."/>
            <person name="Benahmed F."/>
            <person name="Forberger H."/>
            <person name="Halpin R."/>
            <person name="Mulligan S."/>
            <person name="Robinson J."/>
            <person name="White O."/>
            <person name="Rikihisa Y."/>
            <person name="Tettelin H."/>
        </authorList>
    </citation>
    <scope>NUCLEOTIDE SEQUENCE [LARGE SCALE GENOMIC DNA]</scope>
    <source>
        <strain>HZ</strain>
    </source>
</reference>
<comment type="function">
    <text evidence="1">Catalyzes the phosphorylation of pantothenate (Pan), the first step in CoA biosynthesis.</text>
</comment>
<comment type="catalytic activity">
    <reaction evidence="1">
        <text>(R)-pantothenate + ATP = (R)-4'-phosphopantothenate + ADP + H(+)</text>
        <dbReference type="Rhea" id="RHEA:16373"/>
        <dbReference type="ChEBI" id="CHEBI:10986"/>
        <dbReference type="ChEBI" id="CHEBI:15378"/>
        <dbReference type="ChEBI" id="CHEBI:29032"/>
        <dbReference type="ChEBI" id="CHEBI:30616"/>
        <dbReference type="ChEBI" id="CHEBI:456216"/>
        <dbReference type="EC" id="2.7.1.33"/>
    </reaction>
</comment>
<comment type="cofactor">
    <cofactor evidence="1">
        <name>NH4(+)</name>
        <dbReference type="ChEBI" id="CHEBI:28938"/>
    </cofactor>
    <cofactor evidence="1">
        <name>K(+)</name>
        <dbReference type="ChEBI" id="CHEBI:29103"/>
    </cofactor>
    <text evidence="1">A monovalent cation. Ammonium or potassium.</text>
</comment>
<comment type="pathway">
    <text evidence="1">Cofactor biosynthesis; coenzyme A biosynthesis; CoA from (R)-pantothenate: step 1/5.</text>
</comment>
<comment type="subunit">
    <text evidence="1">Homodimer.</text>
</comment>
<comment type="subcellular location">
    <subcellularLocation>
        <location evidence="1">Cytoplasm</location>
    </subcellularLocation>
</comment>
<comment type="similarity">
    <text evidence="1">Belongs to the type III pantothenate kinase family.</text>
</comment>
<dbReference type="EC" id="2.7.1.33" evidence="1"/>
<dbReference type="EMBL" id="CP000235">
    <property type="protein sequence ID" value="ABD43910.1"/>
    <property type="molecule type" value="Genomic_DNA"/>
</dbReference>
<dbReference type="RefSeq" id="WP_011451088.1">
    <property type="nucleotide sequence ID" value="NC_007797.1"/>
</dbReference>
<dbReference type="SMR" id="Q2GJ76"/>
<dbReference type="STRING" id="212042.APH_1014"/>
<dbReference type="PaxDb" id="212042-APH_1014"/>
<dbReference type="EnsemblBacteria" id="ABD43910">
    <property type="protein sequence ID" value="ABD43910"/>
    <property type="gene ID" value="APH_1014"/>
</dbReference>
<dbReference type="KEGG" id="aph:APH_1014"/>
<dbReference type="eggNOG" id="COG1521">
    <property type="taxonomic scope" value="Bacteria"/>
</dbReference>
<dbReference type="HOGENOM" id="CLU_066627_1_0_5"/>
<dbReference type="UniPathway" id="UPA00241">
    <property type="reaction ID" value="UER00352"/>
</dbReference>
<dbReference type="Proteomes" id="UP000001943">
    <property type="component" value="Chromosome"/>
</dbReference>
<dbReference type="GO" id="GO:0005737">
    <property type="term" value="C:cytoplasm"/>
    <property type="evidence" value="ECO:0007669"/>
    <property type="project" value="UniProtKB-SubCell"/>
</dbReference>
<dbReference type="GO" id="GO:0005524">
    <property type="term" value="F:ATP binding"/>
    <property type="evidence" value="ECO:0007669"/>
    <property type="project" value="UniProtKB-UniRule"/>
</dbReference>
<dbReference type="GO" id="GO:0046872">
    <property type="term" value="F:metal ion binding"/>
    <property type="evidence" value="ECO:0007669"/>
    <property type="project" value="UniProtKB-KW"/>
</dbReference>
<dbReference type="GO" id="GO:0004594">
    <property type="term" value="F:pantothenate kinase activity"/>
    <property type="evidence" value="ECO:0007669"/>
    <property type="project" value="UniProtKB-UniRule"/>
</dbReference>
<dbReference type="GO" id="GO:0015937">
    <property type="term" value="P:coenzyme A biosynthetic process"/>
    <property type="evidence" value="ECO:0007669"/>
    <property type="project" value="UniProtKB-UniRule"/>
</dbReference>
<dbReference type="CDD" id="cd24015">
    <property type="entry name" value="ASKHA_NBD_PanK-III"/>
    <property type="match status" value="1"/>
</dbReference>
<dbReference type="Gene3D" id="3.30.420.40">
    <property type="match status" value="2"/>
</dbReference>
<dbReference type="HAMAP" id="MF_01274">
    <property type="entry name" value="Pantothen_kinase_3"/>
    <property type="match status" value="1"/>
</dbReference>
<dbReference type="InterPro" id="IPR043129">
    <property type="entry name" value="ATPase_NBD"/>
</dbReference>
<dbReference type="InterPro" id="IPR004619">
    <property type="entry name" value="Type_III_PanK"/>
</dbReference>
<dbReference type="NCBIfam" id="TIGR00671">
    <property type="entry name" value="baf"/>
    <property type="match status" value="1"/>
</dbReference>
<dbReference type="NCBIfam" id="NF009848">
    <property type="entry name" value="PRK13318.1-6"/>
    <property type="match status" value="1"/>
</dbReference>
<dbReference type="PANTHER" id="PTHR34265">
    <property type="entry name" value="TYPE III PANTOTHENATE KINASE"/>
    <property type="match status" value="1"/>
</dbReference>
<dbReference type="PANTHER" id="PTHR34265:SF1">
    <property type="entry name" value="TYPE III PANTOTHENATE KINASE"/>
    <property type="match status" value="1"/>
</dbReference>
<dbReference type="Pfam" id="PF03309">
    <property type="entry name" value="Pan_kinase"/>
    <property type="match status" value="1"/>
</dbReference>
<dbReference type="SUPFAM" id="SSF53067">
    <property type="entry name" value="Actin-like ATPase domain"/>
    <property type="match status" value="2"/>
</dbReference>
<gene>
    <name evidence="1" type="primary">coaX</name>
    <name type="ordered locus">APH_1014</name>
</gene>
<keyword id="KW-0067">ATP-binding</keyword>
<keyword id="KW-0173">Coenzyme A biosynthesis</keyword>
<keyword id="KW-0963">Cytoplasm</keyword>
<keyword id="KW-0418">Kinase</keyword>
<keyword id="KW-0479">Metal-binding</keyword>
<keyword id="KW-0547">Nucleotide-binding</keyword>
<keyword id="KW-0630">Potassium</keyword>
<keyword id="KW-0808">Transferase</keyword>
<feature type="chain" id="PRO_0000267490" description="Type III pantothenate kinase">
    <location>
        <begin position="1"/>
        <end position="263"/>
    </location>
</feature>
<feature type="active site" description="Proton acceptor" evidence="1">
    <location>
        <position position="110"/>
    </location>
</feature>
<feature type="binding site" evidence="1">
    <location>
        <begin position="6"/>
        <end position="13"/>
    </location>
    <ligand>
        <name>ATP</name>
        <dbReference type="ChEBI" id="CHEBI:30616"/>
    </ligand>
</feature>
<feature type="binding site" evidence="1">
    <location>
        <begin position="108"/>
        <end position="111"/>
    </location>
    <ligand>
        <name>substrate</name>
    </ligand>
</feature>
<feature type="binding site" evidence="1">
    <location>
        <position position="131"/>
    </location>
    <ligand>
        <name>K(+)</name>
        <dbReference type="ChEBI" id="CHEBI:29103"/>
    </ligand>
</feature>
<feature type="binding site" evidence="1">
    <location>
        <position position="134"/>
    </location>
    <ligand>
        <name>ATP</name>
        <dbReference type="ChEBI" id="CHEBI:30616"/>
    </ligand>
</feature>
<feature type="binding site" evidence="1">
    <location>
        <position position="187"/>
    </location>
    <ligand>
        <name>substrate</name>
    </ligand>
</feature>
<name>COAX_ANAPZ</name>
<protein>
    <recommendedName>
        <fullName evidence="1">Type III pantothenate kinase</fullName>
        <ecNumber evidence="1">2.7.1.33</ecNumber>
    </recommendedName>
    <alternativeName>
        <fullName evidence="1">PanK-III</fullName>
    </alternativeName>
    <alternativeName>
        <fullName evidence="1">Pantothenic acid kinase</fullName>
    </alternativeName>
</protein>
<proteinExistence type="inferred from homology"/>
<sequence length="263" mass="28626">MLAIVDVGNTNIKFTLYVDGEFSESWYISTYHERTASELYAILRVLASQANINIHHLVGAAVSSVFPAVNGSITEMFKSFFNIVPVFITSAHASLLGINICLAQNTIGSDRLADIVAARTLYPDRDLLVIDMGTITVFNLVNKNGDLYGQVLSPGLACLVKSVRLCTAALPQVCVNKPTTKVISDATASSLESGLYWGYLSMVEGVIQRILKEESGKSLQTVATGGASNFFRDTTHVLSIDKLLTTKGILQIYRKLIENEEGR</sequence>
<evidence type="ECO:0000255" key="1">
    <source>
        <dbReference type="HAMAP-Rule" id="MF_01274"/>
    </source>
</evidence>
<accession>Q2GJ76</accession>